<organism>
    <name type="scientific">Nicotiana tabacum</name>
    <name type="common">Common tobacco</name>
    <dbReference type="NCBI Taxonomy" id="4097"/>
    <lineage>
        <taxon>Eukaryota</taxon>
        <taxon>Viridiplantae</taxon>
        <taxon>Streptophyta</taxon>
        <taxon>Embryophyta</taxon>
        <taxon>Tracheophyta</taxon>
        <taxon>Spermatophyta</taxon>
        <taxon>Magnoliopsida</taxon>
        <taxon>eudicotyledons</taxon>
        <taxon>Gunneridae</taxon>
        <taxon>Pentapetalae</taxon>
        <taxon>asterids</taxon>
        <taxon>lamiids</taxon>
        <taxon>Solanales</taxon>
        <taxon>Solanaceae</taxon>
        <taxon>Nicotianoideae</taxon>
        <taxon>Nicotianeae</taxon>
        <taxon>Nicotiana</taxon>
    </lineage>
</organism>
<comment type="function">
    <text evidence="3">Component of the cytochrome b6-f complex, which mediates electron transfer between photosystem II (PSII) and photosystem I (PSI), cyclic electron flow around PSI, and state transitions.</text>
</comment>
<comment type="subunit">
    <text evidence="1">The 4 large subunits of the cytochrome b6-f complex are cytochrome b6, subunit IV (17 kDa polypeptide, PetD), cytochrome f and the Rieske protein, while the 4 small subunits are PetG, PetL, PetM and PetN. The complex functions as a dimer (By similarity).</text>
</comment>
<comment type="subcellular location">
    <subcellularLocation>
        <location>Plastid</location>
        <location>Chloroplast thylakoid membrane</location>
        <topology>Single-pass membrane protein</topology>
    </subcellularLocation>
</comment>
<comment type="similarity">
    <text evidence="4">Belongs to the PetN family.</text>
</comment>
<sequence>MDIVSLAWAALMVVFTFSLSLVVWGRSGL</sequence>
<dbReference type="EMBL" id="Z00044">
    <property type="protein sequence ID" value="CAA77412.1"/>
    <property type="molecule type" value="Genomic_DNA"/>
</dbReference>
<dbReference type="RefSeq" id="NP_054489.1">
    <property type="nucleotide sequence ID" value="NC_001879.2"/>
</dbReference>
<dbReference type="SMR" id="P61046"/>
<dbReference type="GeneID" id="800464"/>
<dbReference type="KEGG" id="nta:800464"/>
<dbReference type="Proteomes" id="UP000084051">
    <property type="component" value="Unplaced"/>
</dbReference>
<dbReference type="GO" id="GO:0009535">
    <property type="term" value="C:chloroplast thylakoid membrane"/>
    <property type="evidence" value="ECO:0007669"/>
    <property type="project" value="UniProtKB-SubCell"/>
</dbReference>
<dbReference type="GO" id="GO:0009512">
    <property type="term" value="C:cytochrome b6f complex"/>
    <property type="evidence" value="ECO:0007669"/>
    <property type="project" value="InterPro"/>
</dbReference>
<dbReference type="GO" id="GO:0045158">
    <property type="term" value="F:electron transporter, transferring electrons within cytochrome b6/f complex of photosystem II activity"/>
    <property type="evidence" value="ECO:0007669"/>
    <property type="project" value="InterPro"/>
</dbReference>
<dbReference type="GO" id="GO:0017004">
    <property type="term" value="P:cytochrome complex assembly"/>
    <property type="evidence" value="ECO:0007669"/>
    <property type="project" value="UniProtKB-UniRule"/>
</dbReference>
<dbReference type="GO" id="GO:0015979">
    <property type="term" value="P:photosynthesis"/>
    <property type="evidence" value="ECO:0007669"/>
    <property type="project" value="UniProtKB-KW"/>
</dbReference>
<dbReference type="HAMAP" id="MF_00395">
    <property type="entry name" value="Cytb6_f_PetN"/>
    <property type="match status" value="1"/>
</dbReference>
<dbReference type="InterPro" id="IPR036143">
    <property type="entry name" value="Cytochr_b6-f_cplx_su8_sf"/>
</dbReference>
<dbReference type="InterPro" id="IPR005497">
    <property type="entry name" value="Cytochrome_b6-f_cplx_su8"/>
</dbReference>
<dbReference type="Pfam" id="PF03742">
    <property type="entry name" value="PetN"/>
    <property type="match status" value="1"/>
</dbReference>
<dbReference type="SUPFAM" id="SSF103451">
    <property type="entry name" value="PetN subunit of the cytochrome b6f complex"/>
    <property type="match status" value="1"/>
</dbReference>
<evidence type="ECO:0000250" key="1"/>
<evidence type="ECO:0000255" key="2"/>
<evidence type="ECO:0000269" key="3">
    <source>
    </source>
</evidence>
<evidence type="ECO:0000305" key="4"/>
<geneLocation type="chloroplast"/>
<feature type="chain" id="PRO_0000217132" description="Cytochrome b6-f complex subunit 8">
    <location>
        <begin position="1"/>
        <end position="29"/>
    </location>
</feature>
<feature type="transmembrane region" description="Helical" evidence="2">
    <location>
        <begin position="3"/>
        <end position="23"/>
    </location>
</feature>
<proteinExistence type="evidence at protein level"/>
<name>PETN_TOBAC</name>
<accession>P61046</accession>
<accession>P12178</accession>
<accession>P56789</accession>
<reference key="1">
    <citation type="journal article" date="1986" name="EMBO J.">
        <title>The complete nucleotide sequence of the tobacco chloroplast genome: its gene organization and expression.</title>
        <authorList>
            <person name="Shinozaki K."/>
            <person name="Ohme M."/>
            <person name="Tanaka M."/>
            <person name="Wakasugi T."/>
            <person name="Hayashida N."/>
            <person name="Matsubayashi T."/>
            <person name="Zaita N."/>
            <person name="Chunwongse J."/>
            <person name="Obokata J."/>
            <person name="Yamaguchi-Shinozaki K."/>
            <person name="Ohto C."/>
            <person name="Torazawa K."/>
            <person name="Meng B.-Y."/>
            <person name="Sugita M."/>
            <person name="Deno H."/>
            <person name="Kamogashira T."/>
            <person name="Yamada K."/>
            <person name="Kusuda J."/>
            <person name="Takaiwa F."/>
            <person name="Kato A."/>
            <person name="Tohdoh N."/>
            <person name="Shimada H."/>
            <person name="Sugiura M."/>
        </authorList>
    </citation>
    <scope>NUCLEOTIDE SEQUENCE [LARGE SCALE GENOMIC DNA]</scope>
    <source>
        <strain>cv. Bright Yellow 4</strain>
    </source>
</reference>
<reference key="2">
    <citation type="journal article" date="1999" name="EMBO J.">
        <title>Targeted inactivation of the smallest plastid genome-encoded open reading frame reveals a novel and essential subunit of the cytochrome b(6)f complex.</title>
        <authorList>
            <person name="Hager M."/>
            <person name="Biehler K."/>
            <person name="Illerhaus J."/>
            <person name="Ruf S."/>
            <person name="Bock R."/>
        </authorList>
    </citation>
    <scope>FUNCTION</scope>
    <scope>CHARACTERIZATION</scope>
    <scope>IDENTIFICATION BY MASS SPECTROMETRY</scope>
    <source>
        <strain>cv. Petit Havana</strain>
    </source>
</reference>
<keyword id="KW-0150">Chloroplast</keyword>
<keyword id="KW-0249">Electron transport</keyword>
<keyword id="KW-0472">Membrane</keyword>
<keyword id="KW-0602">Photosynthesis</keyword>
<keyword id="KW-0934">Plastid</keyword>
<keyword id="KW-1185">Reference proteome</keyword>
<keyword id="KW-0793">Thylakoid</keyword>
<keyword id="KW-0812">Transmembrane</keyword>
<keyword id="KW-1133">Transmembrane helix</keyword>
<keyword id="KW-0813">Transport</keyword>
<gene>
    <name type="primary">petN</name>
    <name type="synonym">ycf6</name>
</gene>
<protein>
    <recommendedName>
        <fullName>Cytochrome b6-f complex subunit 8</fullName>
    </recommendedName>
    <alternativeName>
        <fullName>Cytochrome b6-f complex subunit PetN</fullName>
    </alternativeName>
    <alternativeName>
        <fullName>Cytochrome b6-f complex subunit VIII</fullName>
    </alternativeName>
</protein>